<comment type="function">
    <text evidence="1">General (non sugar-specific) component of the phosphoenolpyruvate-dependent sugar phosphotransferase system (sugar PTS). This major carbohydrate active-transport system catalyzes the phosphorylation of incoming sugar substrates concomitantly with their translocation across the cell membrane. Enzyme I transfers the phosphoryl group from phosphoenolpyruvate (PEP) to the phosphoryl carrier protein (HPr).</text>
</comment>
<comment type="catalytic activity">
    <reaction evidence="1">
        <text>L-histidyl-[protein] + phosphoenolpyruvate = N(pros)-phospho-L-histidyl-[protein] + pyruvate</text>
        <dbReference type="Rhea" id="RHEA:23880"/>
        <dbReference type="Rhea" id="RHEA-COMP:9745"/>
        <dbReference type="Rhea" id="RHEA-COMP:9746"/>
        <dbReference type="ChEBI" id="CHEBI:15361"/>
        <dbReference type="ChEBI" id="CHEBI:29979"/>
        <dbReference type="ChEBI" id="CHEBI:58702"/>
        <dbReference type="ChEBI" id="CHEBI:64837"/>
        <dbReference type="EC" id="2.7.3.9"/>
    </reaction>
</comment>
<comment type="cofactor">
    <cofactor evidence="1">
        <name>Mg(2+)</name>
        <dbReference type="ChEBI" id="CHEBI:18420"/>
    </cofactor>
</comment>
<comment type="subunit">
    <text evidence="1">Homodimer.</text>
</comment>
<comment type="subcellular location">
    <subcellularLocation>
        <location evidence="3">Cytoplasm</location>
    </subcellularLocation>
</comment>
<comment type="domain">
    <text evidence="1">The N-terminal domain contains the HPr binding site, the central domain the pyrophosphate/phosphate carrier histidine, and the C-terminal domain the pyruvate binding site.</text>
</comment>
<comment type="miscellaneous">
    <text evidence="1">The reaction takes place in three steps, mediated by a phosphocarrier histidine residue located on the surface of the central domain. The two first partial reactions are catalyzed at an active site located on the N-terminal domain, and the third partial reaction is catalyzed at an active site located on the C-terminal domain. For catalytic turnover, the central domain swivels from the concave surface of the N-terminal domain to that of the C-terminal domain.</text>
</comment>
<comment type="similarity">
    <text evidence="3">Belongs to the PEP-utilizing enzyme family.</text>
</comment>
<proteinExistence type="inferred from homology"/>
<protein>
    <recommendedName>
        <fullName evidence="1">Phosphoenolpyruvate-protein phosphotransferase</fullName>
        <ecNumber evidence="1">2.7.3.9</ecNumber>
    </recommendedName>
    <alternativeName>
        <fullName evidence="1">Phosphotransferase system, enzyme I</fullName>
    </alternativeName>
</protein>
<keyword id="KW-0963">Cytoplasm</keyword>
<keyword id="KW-0418">Kinase</keyword>
<keyword id="KW-0460">Magnesium</keyword>
<keyword id="KW-0479">Metal-binding</keyword>
<keyword id="KW-0598">Phosphotransferase system</keyword>
<keyword id="KW-0762">Sugar transport</keyword>
<keyword id="KW-0808">Transferase</keyword>
<keyword id="KW-0813">Transport</keyword>
<gene>
    <name type="primary">ptsI</name>
    <name type="ordered locus">CPn_0038</name>
    <name type="ordered locus">CP_0737</name>
    <name type="ordered locus">CpB0042</name>
</gene>
<name>PT1_CHLPN</name>
<reference key="1">
    <citation type="journal article" date="1999" name="Nat. Genet.">
        <title>Comparative genomes of Chlamydia pneumoniae and C. trachomatis.</title>
        <authorList>
            <person name="Kalman S."/>
            <person name="Mitchell W.P."/>
            <person name="Marathe R."/>
            <person name="Lammel C.J."/>
            <person name="Fan J."/>
            <person name="Hyman R.W."/>
            <person name="Olinger L."/>
            <person name="Grimwood J."/>
            <person name="Davis R.W."/>
            <person name="Stephens R.S."/>
        </authorList>
    </citation>
    <scope>NUCLEOTIDE SEQUENCE [LARGE SCALE GENOMIC DNA]</scope>
    <source>
        <strain>CWL029</strain>
    </source>
</reference>
<reference key="2">
    <citation type="journal article" date="2000" name="Nucleic Acids Res.">
        <title>Genome sequences of Chlamydia trachomatis MoPn and Chlamydia pneumoniae AR39.</title>
        <authorList>
            <person name="Read T.D."/>
            <person name="Brunham R.C."/>
            <person name="Shen C."/>
            <person name="Gill S.R."/>
            <person name="Heidelberg J.F."/>
            <person name="White O."/>
            <person name="Hickey E.K."/>
            <person name="Peterson J.D."/>
            <person name="Utterback T.R."/>
            <person name="Berry K.J."/>
            <person name="Bass S."/>
            <person name="Linher K.D."/>
            <person name="Weidman J.F."/>
            <person name="Khouri H.M."/>
            <person name="Craven B."/>
            <person name="Bowman C."/>
            <person name="Dodson R.J."/>
            <person name="Gwinn M.L."/>
            <person name="Nelson W.C."/>
            <person name="DeBoy R.T."/>
            <person name="Kolonay J.F."/>
            <person name="McClarty G."/>
            <person name="Salzberg S.L."/>
            <person name="Eisen J.A."/>
            <person name="Fraser C.M."/>
        </authorList>
    </citation>
    <scope>NUCLEOTIDE SEQUENCE [LARGE SCALE GENOMIC DNA]</scope>
    <source>
        <strain>AR39</strain>
    </source>
</reference>
<reference key="3">
    <citation type="journal article" date="2000" name="Nucleic Acids Res.">
        <title>Comparison of whole genome sequences of Chlamydia pneumoniae J138 from Japan and CWL029 from USA.</title>
        <authorList>
            <person name="Shirai M."/>
            <person name="Hirakawa H."/>
            <person name="Kimoto M."/>
            <person name="Tabuchi M."/>
            <person name="Kishi F."/>
            <person name="Ouchi K."/>
            <person name="Shiba T."/>
            <person name="Ishii K."/>
            <person name="Hattori M."/>
            <person name="Kuhara S."/>
            <person name="Nakazawa T."/>
        </authorList>
    </citation>
    <scope>NUCLEOTIDE SEQUENCE [LARGE SCALE GENOMIC DNA]</scope>
    <source>
        <strain>J138</strain>
    </source>
</reference>
<reference key="4">
    <citation type="submission" date="2002-05" db="EMBL/GenBank/DDBJ databases">
        <title>The genome sequence of Chlamydia pneumoniae TW183 and comparison with other Chlamydia strains based on whole genome sequence analysis.</title>
        <authorList>
            <person name="Geng M.M."/>
            <person name="Schuhmacher A."/>
            <person name="Muehldorfer I."/>
            <person name="Bensch K.W."/>
            <person name="Schaefer K.P."/>
            <person name="Schneider S."/>
            <person name="Pohl T."/>
            <person name="Essig A."/>
            <person name="Marre R."/>
            <person name="Melchers K."/>
        </authorList>
    </citation>
    <scope>NUCLEOTIDE SEQUENCE [LARGE SCALE GENOMIC DNA]</scope>
    <source>
        <strain>TW-183</strain>
    </source>
</reference>
<sequence>MDTQSSIGNEEWRIAGTSVVSGMALGKVFFLGTSPLHVRELTLPQEEVEHEIHRYYKALNRSKSDIVALEQEVTGQQGLQEVSSILQAHLEIMKDPLLTEEVVNTIRKDRKNAEYVFSSVMGKIEESLTAVRGMPSVVDRVQDIHDISNRVIGHLCCQHKSSLGESDQNLIIFSEELTPSEVASANSAYIRGFVSLVGAATSHTAIVSRAKSIPYLANISEELWNIAKRYNGKLVLIDGYRGELIFNPKPATLQSCYKKELSVVAHTSQRLVRKSLHPIVSSHAGSDKDVEDLLENFPQTSIGLFRSEFLAVILGRLPTLREQVDLYEKLARFPGDSPSVLRLFDFGEDKPCPGIKNKKERSIRWLLDYSVILEDQLQAIAKASLQGSIKVLIPGVSDVSEIIEVKKKWETIQTRFPKGHKVSWGTMIEFPSAVWMIEEILPECDFLSIGTNDLVQYTLGISRESALPKHLNVTLPPAVIRMIHHVLQAAKQNQVPVSICGEAAGQLSLTPLFIGLGVQELSVAMPVINRLRNHIALLELNSCLEITEALLQAKTCSEVEELLNRNNKITS</sequence>
<accession>Q9Z9E3</accession>
<accession>Q9JRU4</accession>
<evidence type="ECO:0000250" key="1">
    <source>
        <dbReference type="UniProtKB" id="P08839"/>
    </source>
</evidence>
<evidence type="ECO:0000250" key="2">
    <source>
        <dbReference type="UniProtKB" id="P23533"/>
    </source>
</evidence>
<evidence type="ECO:0000305" key="3"/>
<organism>
    <name type="scientific">Chlamydia pneumoniae</name>
    <name type="common">Chlamydophila pneumoniae</name>
    <dbReference type="NCBI Taxonomy" id="83558"/>
    <lineage>
        <taxon>Bacteria</taxon>
        <taxon>Pseudomonadati</taxon>
        <taxon>Chlamydiota</taxon>
        <taxon>Chlamydiia</taxon>
        <taxon>Chlamydiales</taxon>
        <taxon>Chlamydiaceae</taxon>
        <taxon>Chlamydia/Chlamydophila group</taxon>
        <taxon>Chlamydia</taxon>
    </lineage>
</organism>
<dbReference type="EC" id="2.7.3.9" evidence="1"/>
<dbReference type="EMBL" id="AE001363">
    <property type="protein sequence ID" value="AAD18191.1"/>
    <property type="molecule type" value="Genomic_DNA"/>
</dbReference>
<dbReference type="EMBL" id="AE002161">
    <property type="protein sequence ID" value="AAF38542.1"/>
    <property type="molecule type" value="Genomic_DNA"/>
</dbReference>
<dbReference type="EMBL" id="BA000008">
    <property type="protein sequence ID" value="BAA98250.1"/>
    <property type="molecule type" value="Genomic_DNA"/>
</dbReference>
<dbReference type="EMBL" id="AE009440">
    <property type="protein sequence ID" value="AAP97975.1"/>
    <property type="molecule type" value="Genomic_DNA"/>
</dbReference>
<dbReference type="PIR" id="A72127">
    <property type="entry name" value="A72127"/>
</dbReference>
<dbReference type="PIR" id="E81544">
    <property type="entry name" value="E81544"/>
</dbReference>
<dbReference type="PIR" id="H86495">
    <property type="entry name" value="H86495"/>
</dbReference>
<dbReference type="RefSeq" id="NP_224246.1">
    <property type="nucleotide sequence ID" value="NC_000922.1"/>
</dbReference>
<dbReference type="SMR" id="Q9Z9E3"/>
<dbReference type="STRING" id="406984.CPK_ORF00541"/>
<dbReference type="GeneID" id="45050085"/>
<dbReference type="KEGG" id="cpa:CP_0737"/>
<dbReference type="KEGG" id="cpj:ptsI"/>
<dbReference type="KEGG" id="cpn:CPn_0038"/>
<dbReference type="KEGG" id="cpt:CpB0042"/>
<dbReference type="PATRIC" id="fig|115713.3.peg.45"/>
<dbReference type="eggNOG" id="COG1080">
    <property type="taxonomic scope" value="Bacteria"/>
</dbReference>
<dbReference type="HOGENOM" id="CLU_007308_7_0_0"/>
<dbReference type="OrthoDB" id="9765468at2"/>
<dbReference type="Proteomes" id="UP000000583">
    <property type="component" value="Chromosome"/>
</dbReference>
<dbReference type="Proteomes" id="UP000000801">
    <property type="component" value="Chromosome"/>
</dbReference>
<dbReference type="GO" id="GO:0005737">
    <property type="term" value="C:cytoplasm"/>
    <property type="evidence" value="ECO:0007669"/>
    <property type="project" value="UniProtKB-SubCell"/>
</dbReference>
<dbReference type="GO" id="GO:0016301">
    <property type="term" value="F:kinase activity"/>
    <property type="evidence" value="ECO:0007669"/>
    <property type="project" value="UniProtKB-KW"/>
</dbReference>
<dbReference type="GO" id="GO:0046872">
    <property type="term" value="F:metal ion binding"/>
    <property type="evidence" value="ECO:0007669"/>
    <property type="project" value="UniProtKB-KW"/>
</dbReference>
<dbReference type="GO" id="GO:0008965">
    <property type="term" value="F:phosphoenolpyruvate-protein phosphotransferase activity"/>
    <property type="evidence" value="ECO:0007669"/>
    <property type="project" value="UniProtKB-EC"/>
</dbReference>
<dbReference type="GO" id="GO:0009401">
    <property type="term" value="P:phosphoenolpyruvate-dependent sugar phosphotransferase system"/>
    <property type="evidence" value="ECO:0007669"/>
    <property type="project" value="UniProtKB-KW"/>
</dbReference>
<dbReference type="Gene3D" id="3.20.20.60">
    <property type="entry name" value="Phosphoenolpyruvate-binding domains"/>
    <property type="match status" value="1"/>
</dbReference>
<dbReference type="Gene3D" id="3.50.30.10">
    <property type="entry name" value="Phosphohistidine domain"/>
    <property type="match status" value="1"/>
</dbReference>
<dbReference type="Gene3D" id="1.10.274.10">
    <property type="entry name" value="PtsI, HPr-binding domain"/>
    <property type="match status" value="1"/>
</dbReference>
<dbReference type="InterPro" id="IPR008279">
    <property type="entry name" value="PEP-util_enz_mobile_dom"/>
</dbReference>
<dbReference type="InterPro" id="IPR050499">
    <property type="entry name" value="PEP-utilizing_PTS_enzyme"/>
</dbReference>
<dbReference type="InterPro" id="IPR018274">
    <property type="entry name" value="PEP_util_AS"/>
</dbReference>
<dbReference type="InterPro" id="IPR000121">
    <property type="entry name" value="PEP_util_C"/>
</dbReference>
<dbReference type="InterPro" id="IPR023151">
    <property type="entry name" value="PEP_util_CS"/>
</dbReference>
<dbReference type="InterPro" id="IPR036637">
    <property type="entry name" value="Phosphohistidine_dom_sf"/>
</dbReference>
<dbReference type="InterPro" id="IPR006318">
    <property type="entry name" value="PTS_EI-like"/>
</dbReference>
<dbReference type="InterPro" id="IPR008731">
    <property type="entry name" value="PTS_EIN"/>
</dbReference>
<dbReference type="InterPro" id="IPR036618">
    <property type="entry name" value="PtsI_HPr-bd_sf"/>
</dbReference>
<dbReference type="InterPro" id="IPR015813">
    <property type="entry name" value="Pyrv/PenolPyrv_kinase-like_dom"/>
</dbReference>
<dbReference type="InterPro" id="IPR040442">
    <property type="entry name" value="Pyrv_kinase-like_dom_sf"/>
</dbReference>
<dbReference type="NCBIfam" id="TIGR01417">
    <property type="entry name" value="PTS_I_fam"/>
    <property type="match status" value="1"/>
</dbReference>
<dbReference type="PANTHER" id="PTHR46244">
    <property type="entry name" value="PHOSPHOENOLPYRUVATE-PROTEIN PHOSPHOTRANSFERASE"/>
    <property type="match status" value="1"/>
</dbReference>
<dbReference type="PANTHER" id="PTHR46244:SF3">
    <property type="entry name" value="PHOSPHOENOLPYRUVATE-PROTEIN PHOSPHOTRANSFERASE"/>
    <property type="match status" value="1"/>
</dbReference>
<dbReference type="Pfam" id="PF05524">
    <property type="entry name" value="PEP-utilisers_N"/>
    <property type="match status" value="1"/>
</dbReference>
<dbReference type="Pfam" id="PF00391">
    <property type="entry name" value="PEP-utilizers"/>
    <property type="match status" value="1"/>
</dbReference>
<dbReference type="Pfam" id="PF02896">
    <property type="entry name" value="PEP-utilizers_C"/>
    <property type="match status" value="1"/>
</dbReference>
<dbReference type="PRINTS" id="PR01736">
    <property type="entry name" value="PHPHTRNFRASE"/>
</dbReference>
<dbReference type="SUPFAM" id="SSF47831">
    <property type="entry name" value="Enzyme I of the PEP:sugar phosphotransferase system HPr-binding (sub)domain"/>
    <property type="match status" value="1"/>
</dbReference>
<dbReference type="SUPFAM" id="SSF51621">
    <property type="entry name" value="Phosphoenolpyruvate/pyruvate domain"/>
    <property type="match status" value="1"/>
</dbReference>
<dbReference type="SUPFAM" id="SSF52009">
    <property type="entry name" value="Phosphohistidine domain"/>
    <property type="match status" value="1"/>
</dbReference>
<dbReference type="PROSITE" id="PS00742">
    <property type="entry name" value="PEP_ENZYMES_2"/>
    <property type="match status" value="1"/>
</dbReference>
<dbReference type="PROSITE" id="PS00370">
    <property type="entry name" value="PEP_ENZYMES_PHOS_SITE"/>
    <property type="match status" value="1"/>
</dbReference>
<feature type="chain" id="PRO_0000147065" description="Phosphoenolpyruvate-protein phosphotransferase">
    <location>
        <begin position="1"/>
        <end position="571"/>
    </location>
</feature>
<feature type="active site" description="Tele-phosphohistidine intermediate" evidence="1">
    <location>
        <position position="203"/>
    </location>
</feature>
<feature type="active site" description="Proton donor" evidence="1">
    <location>
        <position position="500"/>
    </location>
</feature>
<feature type="binding site" evidence="2">
    <location>
        <position position="306"/>
    </location>
    <ligand>
        <name>phosphoenolpyruvate</name>
        <dbReference type="ChEBI" id="CHEBI:58702"/>
    </ligand>
</feature>
<feature type="binding site" evidence="1">
    <location>
        <position position="342"/>
    </location>
    <ligand>
        <name>phosphoenolpyruvate</name>
        <dbReference type="ChEBI" id="CHEBI:58702"/>
    </ligand>
</feature>
<feature type="binding site" evidence="1">
    <location>
        <position position="429"/>
    </location>
    <ligand>
        <name>Mg(2+)</name>
        <dbReference type="ChEBI" id="CHEBI:18420"/>
    </ligand>
</feature>
<feature type="binding site" evidence="1">
    <location>
        <begin position="452"/>
        <end position="453"/>
    </location>
    <ligand>
        <name>phosphoenolpyruvate</name>
        <dbReference type="ChEBI" id="CHEBI:58702"/>
    </ligand>
</feature>
<feature type="binding site" evidence="1">
    <location>
        <position position="453"/>
    </location>
    <ligand>
        <name>Mg(2+)</name>
        <dbReference type="ChEBI" id="CHEBI:18420"/>
    </ligand>
</feature>
<feature type="binding site" evidence="2">
    <location>
        <position position="463"/>
    </location>
    <ligand>
        <name>phosphoenolpyruvate</name>
        <dbReference type="ChEBI" id="CHEBI:58702"/>
    </ligand>
</feature>
<feature type="sequence variant" description="In strain: CWL029 and TW-183.">
    <original>V</original>
    <variation>I</variation>
    <location>
        <position position="19"/>
    </location>
</feature>
<feature type="sequence conflict" description="In Ref. 1; AAD18191." evidence="3" ref="1">
    <original>I</original>
    <variation>T</variation>
    <location>
        <position position="7"/>
    </location>
</feature>
<feature type="sequence conflict" description="In Ref. 1; AAD18191." evidence="3" ref="1">
    <original>Q</original>
    <variation>R</variation>
    <location>
        <position position="413"/>
    </location>
</feature>